<evidence type="ECO:0000250" key="1"/>
<evidence type="ECO:0000305" key="2"/>
<sequence>MPYFDNISTIAYEGPASKNPLAFKFYNPEEKVGDKTMEEHLRFSVAYWHTFTGDGSDPFGAGNMIRPWNKYSGMDLAKARVEAAFEFFEKLNIPFFCFHDVDIAPEGETLKETYKNLDIIVDMIEEYMKTSKTKLLWNTANLFTHPRFVHGAATSCNADVFAYAAAKVKKGLEIAKRLGAENYVFWGGREGYETLLNTDMKLELDNLARFLHMAVDYAKEIGFDGQFLIEPKPKEPTKHQYDFDVATALAFLQTYGLKDYFKFNIEANHATLAGHTFEHELRVARIHGMLGSVDANQGDMLLGWDTDEFPTDLYSTTLAMYEILKNGGLGRGGLNFDAKVRRGSFEPEDLFYAHIAGMDSFAVGLKVAHRLIEDRVFDEFIEERYKSYTEGIGREIVEGTVDFHKLEAHALQLGEIQNQSGRQERLKTLLNQYLLEVCAAR</sequence>
<keyword id="KW-0119">Carbohydrate metabolism</keyword>
<keyword id="KW-0963">Cytoplasm</keyword>
<keyword id="KW-0413">Isomerase</keyword>
<keyword id="KW-0460">Magnesium</keyword>
<keyword id="KW-0479">Metal-binding</keyword>
<keyword id="KW-0859">Xylose metabolism</keyword>
<feature type="chain" id="PRO_0000195765" description="Xylose isomerase">
    <location>
        <begin position="1"/>
        <end position="441"/>
    </location>
</feature>
<feature type="active site" evidence="1">
    <location>
        <position position="99"/>
    </location>
</feature>
<feature type="active site" evidence="1">
    <location>
        <position position="102"/>
    </location>
</feature>
<feature type="binding site" evidence="1">
    <location>
        <position position="230"/>
    </location>
    <ligand>
        <name>Mg(2+)</name>
        <dbReference type="ChEBI" id="CHEBI:18420"/>
        <label>1</label>
    </ligand>
</feature>
<feature type="binding site" evidence="1">
    <location>
        <position position="266"/>
    </location>
    <ligand>
        <name>Mg(2+)</name>
        <dbReference type="ChEBI" id="CHEBI:18420"/>
        <label>1</label>
    </ligand>
</feature>
<feature type="binding site" evidence="1">
    <location>
        <position position="266"/>
    </location>
    <ligand>
        <name>Mg(2+)</name>
        <dbReference type="ChEBI" id="CHEBI:18420"/>
        <label>2</label>
    </ligand>
</feature>
<feature type="binding site" evidence="1">
    <location>
        <position position="269"/>
    </location>
    <ligand>
        <name>Mg(2+)</name>
        <dbReference type="ChEBI" id="CHEBI:18420"/>
        <label>2</label>
    </ligand>
</feature>
<feature type="binding site" evidence="1">
    <location>
        <position position="294"/>
    </location>
    <ligand>
        <name>Mg(2+)</name>
        <dbReference type="ChEBI" id="CHEBI:18420"/>
        <label>1</label>
    </ligand>
</feature>
<feature type="binding site" evidence="1">
    <location>
        <position position="305"/>
    </location>
    <ligand>
        <name>Mg(2+)</name>
        <dbReference type="ChEBI" id="CHEBI:18420"/>
        <label>2</label>
    </ligand>
</feature>
<feature type="binding site" evidence="1">
    <location>
        <position position="307"/>
    </location>
    <ligand>
        <name>Mg(2+)</name>
        <dbReference type="ChEBI" id="CHEBI:18420"/>
        <label>2</label>
    </ligand>
</feature>
<feature type="binding site" evidence="1">
    <location>
        <position position="337"/>
    </location>
    <ligand>
        <name>Mg(2+)</name>
        <dbReference type="ChEBI" id="CHEBI:18420"/>
        <label>1</label>
    </ligand>
</feature>
<accession>P54272</accession>
<protein>
    <recommendedName>
        <fullName>Xylose isomerase</fullName>
        <ecNumber>5.3.1.5</ecNumber>
    </recommendedName>
</protein>
<dbReference type="EC" id="5.3.1.5"/>
<dbReference type="EMBL" id="L12967">
    <property type="protein sequence ID" value="AAA99461.1"/>
    <property type="molecule type" value="Genomic_DNA"/>
</dbReference>
<dbReference type="EMBL" id="L42008">
    <property type="protein sequence ID" value="AAB46621.1"/>
    <property type="molecule type" value="Genomic_DNA"/>
</dbReference>
<dbReference type="SMR" id="P54272"/>
<dbReference type="GO" id="GO:0005737">
    <property type="term" value="C:cytoplasm"/>
    <property type="evidence" value="ECO:0007669"/>
    <property type="project" value="UniProtKB-SubCell"/>
</dbReference>
<dbReference type="GO" id="GO:0000287">
    <property type="term" value="F:magnesium ion binding"/>
    <property type="evidence" value="ECO:0007669"/>
    <property type="project" value="UniProtKB-UniRule"/>
</dbReference>
<dbReference type="GO" id="GO:0009045">
    <property type="term" value="F:xylose isomerase activity"/>
    <property type="evidence" value="ECO:0007669"/>
    <property type="project" value="UniProtKB-UniRule"/>
</dbReference>
<dbReference type="GO" id="GO:0042732">
    <property type="term" value="P:D-xylose metabolic process"/>
    <property type="evidence" value="ECO:0007669"/>
    <property type="project" value="UniProtKB-UniRule"/>
</dbReference>
<dbReference type="FunFam" id="3.20.20.150:FF:000002">
    <property type="entry name" value="Xylose isomerase"/>
    <property type="match status" value="1"/>
</dbReference>
<dbReference type="Gene3D" id="3.20.20.150">
    <property type="entry name" value="Divalent-metal-dependent TIM barrel enzymes"/>
    <property type="match status" value="1"/>
</dbReference>
<dbReference type="HAMAP" id="MF_00455">
    <property type="entry name" value="Xylose_isom_A"/>
    <property type="match status" value="1"/>
</dbReference>
<dbReference type="InterPro" id="IPR036237">
    <property type="entry name" value="Xyl_isomerase-like_sf"/>
</dbReference>
<dbReference type="InterPro" id="IPR013022">
    <property type="entry name" value="Xyl_isomerase-like_TIM-brl"/>
</dbReference>
<dbReference type="InterPro" id="IPR013452">
    <property type="entry name" value="Xylose_isom_bac"/>
</dbReference>
<dbReference type="InterPro" id="IPR001998">
    <property type="entry name" value="Xylose_isomerase"/>
</dbReference>
<dbReference type="NCBIfam" id="NF003998">
    <property type="entry name" value="PRK05474.1"/>
    <property type="match status" value="1"/>
</dbReference>
<dbReference type="NCBIfam" id="TIGR02630">
    <property type="entry name" value="xylose_isom_A"/>
    <property type="match status" value="1"/>
</dbReference>
<dbReference type="PANTHER" id="PTHR48408">
    <property type="match status" value="1"/>
</dbReference>
<dbReference type="PANTHER" id="PTHR48408:SF1">
    <property type="entry name" value="XYLOSE ISOMERASE"/>
    <property type="match status" value="1"/>
</dbReference>
<dbReference type="Pfam" id="PF01261">
    <property type="entry name" value="AP_endonuc_2"/>
    <property type="match status" value="1"/>
</dbReference>
<dbReference type="PRINTS" id="PR00688">
    <property type="entry name" value="XYLOSISMRASE"/>
</dbReference>
<dbReference type="SUPFAM" id="SSF51658">
    <property type="entry name" value="Xylose isomerase-like"/>
    <property type="match status" value="1"/>
</dbReference>
<dbReference type="PROSITE" id="PS51415">
    <property type="entry name" value="XYLOSE_ISOMERASE"/>
    <property type="match status" value="1"/>
</dbReference>
<name>XYLA_BACSW</name>
<reference key="1">
    <citation type="journal article" date="1995" name="Biochem. Mol. Biol. Int.">
        <title>Molecular cloning and characterization of the xylose isomerase gene from a thermophilic Bacillus species.</title>
        <authorList>
            <person name="Liao W.X."/>
            <person name="Earnest L."/>
            <person name="Kok S.L."/>
            <person name="Jeyaseelan K."/>
        </authorList>
    </citation>
    <scope>NUCLEOTIDE SEQUENCE [GENOMIC DNA]</scope>
    <scope>CHARACTERIZATION</scope>
</reference>
<reference key="2">
    <citation type="submission" date="1995-05" db="EMBL/GenBank/DDBJ databases">
        <authorList>
            <person name="Jeyaseelan K."/>
            <person name="Liao W.X."/>
            <person name="Earnest L."/>
            <person name="Kok S.L."/>
        </authorList>
    </citation>
    <scope>NUCLEOTIDE SEQUENCE [GENOMIC DNA]</scope>
</reference>
<comment type="function">
    <text>Exhibits xylose isomerase activity.</text>
</comment>
<comment type="catalytic activity">
    <reaction>
        <text>alpha-D-xylose = alpha-D-xylulofuranose</text>
        <dbReference type="Rhea" id="RHEA:22816"/>
        <dbReference type="ChEBI" id="CHEBI:28518"/>
        <dbReference type="ChEBI" id="CHEBI:188998"/>
        <dbReference type="EC" id="5.3.1.5"/>
    </reaction>
</comment>
<comment type="cofactor">
    <cofactor>
        <name>Mg(2+)</name>
        <dbReference type="ChEBI" id="CHEBI:18420"/>
    </cofactor>
    <text>Binds 2 magnesium ions per subunit.</text>
</comment>
<comment type="biophysicochemical properties">
    <temperatureDependence>
        <text>Optimum temperature is 85 degrees Celsius. Active from 60 to 100 degrees Celsius.</text>
    </temperatureDependence>
</comment>
<comment type="subunit">
    <text>Homotetramer.</text>
</comment>
<comment type="subcellular location">
    <subcellularLocation>
        <location>Cytoplasm</location>
    </subcellularLocation>
</comment>
<comment type="similarity">
    <text evidence="2">Belongs to the xylose isomerase family.</text>
</comment>
<organism>
    <name type="scientific">Bacillus sp. (strain LW2)</name>
    <dbReference type="NCBI Taxonomy" id="72576"/>
    <lineage>
        <taxon>Bacteria</taxon>
        <taxon>Bacillati</taxon>
        <taxon>Bacillota</taxon>
        <taxon>Bacilli</taxon>
        <taxon>Bacillales</taxon>
        <taxon>Bacillaceae</taxon>
        <taxon>Bacillus</taxon>
    </lineage>
</organism>
<proteinExistence type="evidence at protein level"/>
<gene>
    <name type="primary">xylA</name>
</gene>